<evidence type="ECO:0000250" key="1">
    <source>
        <dbReference type="UniProtKB" id="P11544"/>
    </source>
</evidence>
<evidence type="ECO:0000250" key="2">
    <source>
        <dbReference type="UniProtKB" id="P24481"/>
    </source>
</evidence>
<evidence type="ECO:0000250" key="3">
    <source>
        <dbReference type="UniProtKB" id="Q68G84"/>
    </source>
</evidence>
<evidence type="ECO:0000255" key="4">
    <source>
        <dbReference type="PROSITE-ProRule" id="PRU10122"/>
    </source>
</evidence>
<evidence type="ECO:0000305" key="5"/>
<dbReference type="EC" id="4.3.1.24" evidence="2"/>
<dbReference type="EMBL" id="Y12461">
    <property type="protein sequence ID" value="CAA73065.1"/>
    <property type="molecule type" value="mRNA"/>
</dbReference>
<dbReference type="PIR" id="T12749">
    <property type="entry name" value="T12749"/>
</dbReference>
<dbReference type="SMR" id="O04058"/>
<dbReference type="UniPathway" id="UPA00713">
    <property type="reaction ID" value="UER00725"/>
</dbReference>
<dbReference type="GO" id="GO:0005737">
    <property type="term" value="C:cytoplasm"/>
    <property type="evidence" value="ECO:0007669"/>
    <property type="project" value="UniProtKB-SubCell"/>
</dbReference>
<dbReference type="GO" id="GO:0045548">
    <property type="term" value="F:phenylalanine ammonia-lyase activity"/>
    <property type="evidence" value="ECO:0007669"/>
    <property type="project" value="UniProtKB-EC"/>
</dbReference>
<dbReference type="GO" id="GO:0009800">
    <property type="term" value="P:cinnamic acid biosynthetic process"/>
    <property type="evidence" value="ECO:0007669"/>
    <property type="project" value="UniProtKB-UniPathway"/>
</dbReference>
<dbReference type="GO" id="GO:0006559">
    <property type="term" value="P:L-phenylalanine catabolic process"/>
    <property type="evidence" value="ECO:0007669"/>
    <property type="project" value="UniProtKB-KW"/>
</dbReference>
<dbReference type="CDD" id="cd00332">
    <property type="entry name" value="PAL-HAL"/>
    <property type="match status" value="1"/>
</dbReference>
<dbReference type="FunFam" id="1.10.274.20:FF:000001">
    <property type="entry name" value="Phenylalanine ammonia-lyase"/>
    <property type="match status" value="1"/>
</dbReference>
<dbReference type="FunFam" id="1.10.275.10:FF:000009">
    <property type="entry name" value="Phenylalanine ammonia-lyase"/>
    <property type="match status" value="1"/>
</dbReference>
<dbReference type="FunFam" id="1.20.200.10:FF:000009">
    <property type="entry name" value="Phenylalanine ammonia-lyase"/>
    <property type="match status" value="1"/>
</dbReference>
<dbReference type="Gene3D" id="1.20.200.10">
    <property type="entry name" value="Fumarase/aspartase (Central domain)"/>
    <property type="match status" value="1"/>
</dbReference>
<dbReference type="Gene3D" id="1.10.275.10">
    <property type="entry name" value="Fumarase/aspartase (N-terminal domain)"/>
    <property type="match status" value="1"/>
</dbReference>
<dbReference type="Gene3D" id="1.10.274.20">
    <property type="entry name" value="Phenylalanine ammonia-lyase 1, domain 3"/>
    <property type="match status" value="1"/>
</dbReference>
<dbReference type="InterPro" id="IPR001106">
    <property type="entry name" value="Aromatic_Lyase"/>
</dbReference>
<dbReference type="InterPro" id="IPR024083">
    <property type="entry name" value="Fumarase/histidase_N"/>
</dbReference>
<dbReference type="InterPro" id="IPR008948">
    <property type="entry name" value="L-Aspartase-like"/>
</dbReference>
<dbReference type="InterPro" id="IPR022313">
    <property type="entry name" value="Phe/His_NH3-lyase_AS"/>
</dbReference>
<dbReference type="InterPro" id="IPR005922">
    <property type="entry name" value="Phe_NH3-lyase"/>
</dbReference>
<dbReference type="InterPro" id="IPR023144">
    <property type="entry name" value="Phe_NH3-lyase_shielding_dom_sf"/>
</dbReference>
<dbReference type="NCBIfam" id="TIGR01226">
    <property type="entry name" value="phe_am_lyase"/>
    <property type="match status" value="1"/>
</dbReference>
<dbReference type="PANTHER" id="PTHR10362">
    <property type="entry name" value="HISTIDINE AMMONIA-LYASE"/>
    <property type="match status" value="1"/>
</dbReference>
<dbReference type="Pfam" id="PF00221">
    <property type="entry name" value="Lyase_aromatic"/>
    <property type="match status" value="1"/>
</dbReference>
<dbReference type="SUPFAM" id="SSF48557">
    <property type="entry name" value="L-aspartase-like"/>
    <property type="match status" value="1"/>
</dbReference>
<dbReference type="PROSITE" id="PS00488">
    <property type="entry name" value="PAL_HISTIDASE"/>
    <property type="match status" value="1"/>
</dbReference>
<keyword id="KW-0963">Cytoplasm</keyword>
<keyword id="KW-0456">Lyase</keyword>
<keyword id="KW-0585">Phenylalanine catabolism</keyword>
<keyword id="KW-0587">Phenylpropanoid metabolism</keyword>
<accession>O04058</accession>
<feature type="chain" id="PRO_0000215392" description="Phenylalanine ammonia-lyase">
    <location>
        <begin position="1"/>
        <end position="667"/>
    </location>
</feature>
<feature type="active site" description="Proton donor/acceptor" evidence="3">
    <location>
        <position position="103"/>
    </location>
</feature>
<feature type="binding site" evidence="3">
    <location>
        <position position="255"/>
    </location>
    <ligand>
        <name>(E)-cinnamate</name>
        <dbReference type="ChEBI" id="CHEBI:15669"/>
    </ligand>
</feature>
<feature type="binding site" evidence="3">
    <location>
        <position position="343"/>
    </location>
    <ligand>
        <name>(E)-cinnamate</name>
        <dbReference type="ChEBI" id="CHEBI:15669"/>
    </ligand>
</feature>
<feature type="binding site" evidence="3">
    <location>
        <position position="349"/>
    </location>
    <ligand>
        <name>(E)-cinnamate</name>
        <dbReference type="ChEBI" id="CHEBI:15669"/>
    </ligand>
</feature>
<feature type="binding site" evidence="3">
    <location>
        <position position="379"/>
    </location>
    <ligand>
        <name>(E)-cinnamate</name>
        <dbReference type="ChEBI" id="CHEBI:15669"/>
    </ligand>
</feature>
<feature type="binding site" evidence="1">
    <location>
        <position position="451"/>
    </location>
    <ligand>
        <name>(E)-cinnamate</name>
        <dbReference type="ChEBI" id="CHEBI:15669"/>
    </ligand>
</feature>
<feature type="binding site" evidence="1">
    <location>
        <position position="479"/>
    </location>
    <ligand>
        <name>(E)-cinnamate</name>
        <dbReference type="ChEBI" id="CHEBI:15669"/>
    </ligand>
</feature>
<feature type="binding site" evidence="3">
    <location>
        <position position="482"/>
    </location>
    <ligand>
        <name>(E)-cinnamate</name>
        <dbReference type="ChEBI" id="CHEBI:15669"/>
    </ligand>
</feature>
<feature type="modified residue" description="2,3-didehydroalanine (Ser)" evidence="4">
    <location>
        <position position="198"/>
    </location>
</feature>
<feature type="cross-link" description="5-imidazolinone (Ala-Gly)" evidence="3">
    <location>
        <begin position="197"/>
        <end position="199"/>
    </location>
</feature>
<name>PALY_HELAN</name>
<comment type="function">
    <text evidence="2">This is a key enzyme of plant metabolism catalyzing the first reaction in the biosynthesis from L-phenylalanine of a wide variety of natural products based on the phenylpropane skeleton.</text>
</comment>
<comment type="catalytic activity">
    <reaction evidence="2">
        <text>L-phenylalanine = (E)-cinnamate + NH4(+)</text>
        <dbReference type="Rhea" id="RHEA:21384"/>
        <dbReference type="ChEBI" id="CHEBI:15669"/>
        <dbReference type="ChEBI" id="CHEBI:28938"/>
        <dbReference type="ChEBI" id="CHEBI:58095"/>
        <dbReference type="EC" id="4.3.1.24"/>
    </reaction>
</comment>
<comment type="pathway">
    <text evidence="5">Phenylpropanoid metabolism; trans-cinnamate biosynthesis; trans-cinnamate from L-phenylalanine: step 1/1.</text>
</comment>
<comment type="subunit">
    <text evidence="2">Homotetramer.</text>
</comment>
<comment type="subcellular location">
    <subcellularLocation>
        <location evidence="5">Cytoplasm</location>
    </subcellularLocation>
</comment>
<comment type="PTM">
    <text evidence="3">Contains an active site 4-methylidene-imidazol-5-one (MIO), which is formed autocatalytically by cyclization and dehydration of residues Ala-Ser-Gly.</text>
</comment>
<comment type="similarity">
    <text evidence="5">Belongs to the PAL/histidase family.</text>
</comment>
<protein>
    <recommendedName>
        <fullName>Phenylalanine ammonia-lyase</fullName>
        <ecNumber evidence="2">4.3.1.24</ecNumber>
    </recommendedName>
</protein>
<reference key="1">
    <citation type="online journal article" date="1998" name="Plant Gene Register">
        <title>Isolation of a complete PAL cDNA from sunflower.</title>
        <authorList>
            <person name="Mazeyrat F.A."/>
            <person name="Salles S."/>
            <person name="Drevet J."/>
            <person name="Roeckel-Drevet P."/>
            <person name="Tourvieille D."/>
            <person name="Ledoigt G."/>
        </authorList>
        <locator>PGR98-108</locator>
    </citation>
    <scope>NUCLEOTIDE SEQUENCE [MRNA]</scope>
</reference>
<organism>
    <name type="scientific">Helianthus annuus</name>
    <name type="common">Common sunflower</name>
    <dbReference type="NCBI Taxonomy" id="4232"/>
    <lineage>
        <taxon>Eukaryota</taxon>
        <taxon>Viridiplantae</taxon>
        <taxon>Streptophyta</taxon>
        <taxon>Embryophyta</taxon>
        <taxon>Tracheophyta</taxon>
        <taxon>Spermatophyta</taxon>
        <taxon>Magnoliopsida</taxon>
        <taxon>eudicotyledons</taxon>
        <taxon>Gunneridae</taxon>
        <taxon>Pentapetalae</taxon>
        <taxon>asterids</taxon>
        <taxon>campanulids</taxon>
        <taxon>Asterales</taxon>
        <taxon>Asteraceae</taxon>
        <taxon>Asteroideae</taxon>
        <taxon>Heliantheae alliance</taxon>
        <taxon>Heliantheae</taxon>
        <taxon>Helianthus</taxon>
    </lineage>
</organism>
<proteinExistence type="evidence at transcript level"/>
<gene>
    <name type="primary">PAL</name>
</gene>
<sequence length="667" mass="72076">MENGTHVNGSANGFCIKDPLNWGVAAEALTGSHLDEVKKMVGEFRKPVVKLGGETLTVSQVAGISAAGDGNMVKVELSEAARAGVKASSDWVMESMNKGTDSYGVTTGFGATSHRRTKNGGALQKELIRFLNAGIFGNGTESSHTLPHSATRAAMLVRINTLLQGYSGIRFEILEAITKFLNNNITPCLPLRGTITASGDLVPLSYIAGLLTGRPNSKAVGPAGEVLNAESAFAQAGVEGGFFELQPKEGLALVNGTAVGSGMASMVLFEANVLALLSEVLSAIFAEVMQGKPEFTDHLTHKLKHHPGQIEAAAIMEYILDGSDYVKAAQKVHEMDPLQKPKQDRYALRTSPQWLGPQIEVIRSATKMIEREINSVNDNPLIDVSRNKALHGGNFQGTPIGVSMDNTRLAIAAIGKVTIAQFSELVNDFYNNGLPSHLSGGRNPSLDSGFKGGEIAMASYCSELQFLANPVTNHVQSAEQHNQDVNSLGLISARKTAEAVDILKLMSSTYLVALCQSIDLRHLEENMKSTVKNTVSQVAKKVLTMGVNGELHPSRFCEKDLLRVVDREYVFAYADDPCLTTYPLMQKLRQVLVDHALNNGETEKNANTSIFQKIATFEDELKAILPKEVESVRVAFENGTMSIPNRIKACRSYPLYRFVREELGGAT</sequence>